<reference key="1">
    <citation type="journal article" date="2005" name="Nature">
        <title>The genome of the social amoeba Dictyostelium discoideum.</title>
        <authorList>
            <person name="Eichinger L."/>
            <person name="Pachebat J.A."/>
            <person name="Gloeckner G."/>
            <person name="Rajandream M.A."/>
            <person name="Sucgang R."/>
            <person name="Berriman M."/>
            <person name="Song J."/>
            <person name="Olsen R."/>
            <person name="Szafranski K."/>
            <person name="Xu Q."/>
            <person name="Tunggal B."/>
            <person name="Kummerfeld S."/>
            <person name="Madera M."/>
            <person name="Konfortov B.A."/>
            <person name="Rivero F."/>
            <person name="Bankier A.T."/>
            <person name="Lehmann R."/>
            <person name="Hamlin N."/>
            <person name="Davies R."/>
            <person name="Gaudet P."/>
            <person name="Fey P."/>
            <person name="Pilcher K."/>
            <person name="Chen G."/>
            <person name="Saunders D."/>
            <person name="Sodergren E.J."/>
            <person name="Davis P."/>
            <person name="Kerhornou A."/>
            <person name="Nie X."/>
            <person name="Hall N."/>
            <person name="Anjard C."/>
            <person name="Hemphill L."/>
            <person name="Bason N."/>
            <person name="Farbrother P."/>
            <person name="Desany B."/>
            <person name="Just E."/>
            <person name="Morio T."/>
            <person name="Rost R."/>
            <person name="Churcher C.M."/>
            <person name="Cooper J."/>
            <person name="Haydock S."/>
            <person name="van Driessche N."/>
            <person name="Cronin A."/>
            <person name="Goodhead I."/>
            <person name="Muzny D.M."/>
            <person name="Mourier T."/>
            <person name="Pain A."/>
            <person name="Lu M."/>
            <person name="Harper D."/>
            <person name="Lindsay R."/>
            <person name="Hauser H."/>
            <person name="James K.D."/>
            <person name="Quiles M."/>
            <person name="Madan Babu M."/>
            <person name="Saito T."/>
            <person name="Buchrieser C."/>
            <person name="Wardroper A."/>
            <person name="Felder M."/>
            <person name="Thangavelu M."/>
            <person name="Johnson D."/>
            <person name="Knights A."/>
            <person name="Loulseged H."/>
            <person name="Mungall K.L."/>
            <person name="Oliver K."/>
            <person name="Price C."/>
            <person name="Quail M.A."/>
            <person name="Urushihara H."/>
            <person name="Hernandez J."/>
            <person name="Rabbinowitsch E."/>
            <person name="Steffen D."/>
            <person name="Sanders M."/>
            <person name="Ma J."/>
            <person name="Kohara Y."/>
            <person name="Sharp S."/>
            <person name="Simmonds M.N."/>
            <person name="Spiegler S."/>
            <person name="Tivey A."/>
            <person name="Sugano S."/>
            <person name="White B."/>
            <person name="Walker D."/>
            <person name="Woodward J.R."/>
            <person name="Winckler T."/>
            <person name="Tanaka Y."/>
            <person name="Shaulsky G."/>
            <person name="Schleicher M."/>
            <person name="Weinstock G.M."/>
            <person name="Rosenthal A."/>
            <person name="Cox E.C."/>
            <person name="Chisholm R.L."/>
            <person name="Gibbs R.A."/>
            <person name="Loomis W.F."/>
            <person name="Platzer M."/>
            <person name="Kay R.R."/>
            <person name="Williams J.G."/>
            <person name="Dear P.H."/>
            <person name="Noegel A.A."/>
            <person name="Barrell B.G."/>
            <person name="Kuspa A."/>
        </authorList>
    </citation>
    <scope>NUCLEOTIDE SEQUENCE [LARGE SCALE GENOMIC DNA]</scope>
    <source>
        <strain>AX4</strain>
    </source>
</reference>
<feature type="chain" id="PRO_0000327948" description="Adenylate kinase isoenzyme 6 homolog">
    <location>
        <begin position="1"/>
        <end position="175"/>
    </location>
</feature>
<feature type="region of interest" description="NMPbind" evidence="1">
    <location>
        <begin position="37"/>
        <end position="60"/>
    </location>
</feature>
<feature type="region of interest" description="LID" evidence="1">
    <location>
        <begin position="112"/>
        <end position="122"/>
    </location>
</feature>
<feature type="binding site" evidence="1">
    <location>
        <position position="17"/>
    </location>
    <ligand>
        <name>ATP</name>
        <dbReference type="ChEBI" id="CHEBI:30616"/>
    </ligand>
</feature>
<feature type="binding site" evidence="1">
    <location>
        <position position="19"/>
    </location>
    <ligand>
        <name>ATP</name>
        <dbReference type="ChEBI" id="CHEBI:30616"/>
    </ligand>
</feature>
<feature type="binding site" evidence="1">
    <location>
        <position position="20"/>
    </location>
    <ligand>
        <name>ATP</name>
        <dbReference type="ChEBI" id="CHEBI:30616"/>
    </ligand>
</feature>
<feature type="binding site" evidence="1">
    <location>
        <position position="21"/>
    </location>
    <ligand>
        <name>ATP</name>
        <dbReference type="ChEBI" id="CHEBI:30616"/>
    </ligand>
</feature>
<feature type="binding site" evidence="1">
    <location>
        <position position="22"/>
    </location>
    <ligand>
        <name>ATP</name>
        <dbReference type="ChEBI" id="CHEBI:30616"/>
    </ligand>
</feature>
<feature type="binding site" evidence="1">
    <location>
        <position position="113"/>
    </location>
    <ligand>
        <name>ATP</name>
        <dbReference type="ChEBI" id="CHEBI:30616"/>
    </ligand>
</feature>
<gene>
    <name type="ORF">DDB_G0278493</name>
</gene>
<sequence length="175" mass="20414">MNIKRNKPNILITGTPGTGKTSLAGVIASNNEMNHIDISSAVKEKELHDGWDSEFQCYILDEDKVCDEFEDVMVKGGNVVDHHGCEWFPERWFDLVIVLRTDIKILNDRLEKRNYNQHKITNNLDCEIMQVILDEARNSYKQEIVVELPSTTLEDNENNQNFISQWIQNWYEKNN</sequence>
<accession>Q54Y03</accession>
<dbReference type="EC" id="2.7.4.3" evidence="1"/>
<dbReference type="EMBL" id="AAFI02000023">
    <property type="protein sequence ID" value="EAL68419.1"/>
    <property type="molecule type" value="Genomic_DNA"/>
</dbReference>
<dbReference type="RefSeq" id="XP_642399.1">
    <property type="nucleotide sequence ID" value="XM_637307.1"/>
</dbReference>
<dbReference type="SMR" id="Q54Y03"/>
<dbReference type="FunCoup" id="Q54Y03">
    <property type="interactions" value="586"/>
</dbReference>
<dbReference type="STRING" id="44689.Q54Y03"/>
<dbReference type="PaxDb" id="44689-DDB0230995"/>
<dbReference type="EnsemblProtists" id="EAL68419">
    <property type="protein sequence ID" value="EAL68419"/>
    <property type="gene ID" value="DDB_G0278493"/>
</dbReference>
<dbReference type="GeneID" id="8621604"/>
<dbReference type="KEGG" id="ddi:DDB_G0278493"/>
<dbReference type="dictyBase" id="DDB_G0278493"/>
<dbReference type="VEuPathDB" id="AmoebaDB:DDB_G0278493"/>
<dbReference type="eggNOG" id="KOG3347">
    <property type="taxonomic scope" value="Eukaryota"/>
</dbReference>
<dbReference type="HOGENOM" id="CLU_079096_3_1_1"/>
<dbReference type="InParanoid" id="Q54Y03"/>
<dbReference type="OMA" id="QCEIFGT"/>
<dbReference type="PhylomeDB" id="Q54Y03"/>
<dbReference type="Reactome" id="R-DDI-499943">
    <property type="pathway name" value="Interconversion of nucleotide di- and triphosphates"/>
</dbReference>
<dbReference type="PRO" id="PR:Q54Y03"/>
<dbReference type="Proteomes" id="UP000002195">
    <property type="component" value="Chromosome 3"/>
</dbReference>
<dbReference type="GO" id="GO:0005737">
    <property type="term" value="C:cytoplasm"/>
    <property type="evidence" value="ECO:0000318"/>
    <property type="project" value="GO_Central"/>
</dbReference>
<dbReference type="GO" id="GO:0005634">
    <property type="term" value="C:nucleus"/>
    <property type="evidence" value="ECO:0000318"/>
    <property type="project" value="GO_Central"/>
</dbReference>
<dbReference type="GO" id="GO:0004017">
    <property type="term" value="F:adenylate kinase activity"/>
    <property type="evidence" value="ECO:0000318"/>
    <property type="project" value="GO_Central"/>
</dbReference>
<dbReference type="GO" id="GO:0005524">
    <property type="term" value="F:ATP binding"/>
    <property type="evidence" value="ECO:0000318"/>
    <property type="project" value="GO_Central"/>
</dbReference>
<dbReference type="GO" id="GO:0016887">
    <property type="term" value="F:ATP hydrolysis activity"/>
    <property type="evidence" value="ECO:0007669"/>
    <property type="project" value="UniProtKB-UniRule"/>
</dbReference>
<dbReference type="GO" id="GO:0030490">
    <property type="term" value="P:maturation of SSU-rRNA"/>
    <property type="evidence" value="ECO:0000250"/>
    <property type="project" value="dictyBase"/>
</dbReference>
<dbReference type="GO" id="GO:0006979">
    <property type="term" value="P:response to oxidative stress"/>
    <property type="evidence" value="ECO:0000250"/>
    <property type="project" value="dictyBase"/>
</dbReference>
<dbReference type="FunFam" id="3.40.50.300:FF:000372">
    <property type="entry name" value="Adenylate kinase isoenzyme 6 homolog"/>
    <property type="match status" value="1"/>
</dbReference>
<dbReference type="Gene3D" id="3.40.50.300">
    <property type="entry name" value="P-loop containing nucleotide triphosphate hydrolases"/>
    <property type="match status" value="1"/>
</dbReference>
<dbReference type="HAMAP" id="MF_00039">
    <property type="entry name" value="Adenylate_kinase_AK6"/>
    <property type="match status" value="1"/>
</dbReference>
<dbReference type="InterPro" id="IPR020618">
    <property type="entry name" value="Adenyl_kinase_AK6"/>
</dbReference>
<dbReference type="InterPro" id="IPR027417">
    <property type="entry name" value="P-loop_NTPase"/>
</dbReference>
<dbReference type="PANTHER" id="PTHR12595:SF0">
    <property type="entry name" value="ADENYLATE KINASE ISOENZYME 6"/>
    <property type="match status" value="1"/>
</dbReference>
<dbReference type="PANTHER" id="PTHR12595">
    <property type="entry name" value="POS9-ACTIVATING FACTOR FAP7-RELATED"/>
    <property type="match status" value="1"/>
</dbReference>
<dbReference type="Pfam" id="PF13238">
    <property type="entry name" value="AAA_18"/>
    <property type="match status" value="1"/>
</dbReference>
<dbReference type="SUPFAM" id="SSF52540">
    <property type="entry name" value="P-loop containing nucleoside triphosphate hydrolases"/>
    <property type="match status" value="1"/>
</dbReference>
<evidence type="ECO:0000255" key="1">
    <source>
        <dbReference type="HAMAP-Rule" id="MF_03173"/>
    </source>
</evidence>
<keyword id="KW-0067">ATP-binding</keyword>
<keyword id="KW-0963">Cytoplasm</keyword>
<keyword id="KW-0418">Kinase</keyword>
<keyword id="KW-0547">Nucleotide-binding</keyword>
<keyword id="KW-0539">Nucleus</keyword>
<keyword id="KW-1185">Reference proteome</keyword>
<keyword id="KW-0690">Ribosome biogenesis</keyword>
<keyword id="KW-0698">rRNA processing</keyword>
<keyword id="KW-0808">Transferase</keyword>
<protein>
    <recommendedName>
        <fullName evidence="1">Adenylate kinase isoenzyme 6 homolog</fullName>
        <shortName evidence="1">AK6</shortName>
        <ecNumber evidence="1">2.7.4.3</ecNumber>
    </recommendedName>
    <alternativeName>
        <fullName evidence="1">Dual activity adenylate kinase/ATPase</fullName>
        <shortName evidence="1">AK/ATPase</shortName>
    </alternativeName>
</protein>
<organism>
    <name type="scientific">Dictyostelium discoideum</name>
    <name type="common">Social amoeba</name>
    <dbReference type="NCBI Taxonomy" id="44689"/>
    <lineage>
        <taxon>Eukaryota</taxon>
        <taxon>Amoebozoa</taxon>
        <taxon>Evosea</taxon>
        <taxon>Eumycetozoa</taxon>
        <taxon>Dictyostelia</taxon>
        <taxon>Dictyosteliales</taxon>
        <taxon>Dictyosteliaceae</taxon>
        <taxon>Dictyostelium</taxon>
    </lineage>
</organism>
<proteinExistence type="inferred from homology"/>
<comment type="function">
    <text evidence="1">Broad-specificity nucleoside monophosphate (NMP) kinase that catalyzes the reversible transfer of the terminal phosphate group between nucleoside triphosphates and monophosphates. Also has ATPase activity. Involved in the late cytoplasmic maturation steps of the 40S ribosomal particles, specifically 18S rRNA maturation. While NMP activity is not required for ribosome maturation, ATPase activity is. Associates transiently with small ribosomal subunit protein uS11. ATP hydrolysis breaks the interaction with uS11. May temporarily remove uS11 from the ribosome to enable a conformational change of the ribosomal RNA that is needed for the final maturation step of the small ribosomal subunit. Its NMP activity may have a role in nuclear energy homeostasis.</text>
</comment>
<comment type="catalytic activity">
    <reaction evidence="1">
        <text>AMP + ATP = 2 ADP</text>
        <dbReference type="Rhea" id="RHEA:12973"/>
        <dbReference type="ChEBI" id="CHEBI:30616"/>
        <dbReference type="ChEBI" id="CHEBI:456215"/>
        <dbReference type="ChEBI" id="CHEBI:456216"/>
        <dbReference type="EC" id="2.7.4.3"/>
    </reaction>
</comment>
<comment type="catalytic activity">
    <reaction evidence="1">
        <text>ATP + H2O = ADP + phosphate + H(+)</text>
        <dbReference type="Rhea" id="RHEA:13065"/>
        <dbReference type="ChEBI" id="CHEBI:15377"/>
        <dbReference type="ChEBI" id="CHEBI:15378"/>
        <dbReference type="ChEBI" id="CHEBI:30616"/>
        <dbReference type="ChEBI" id="CHEBI:43474"/>
        <dbReference type="ChEBI" id="CHEBI:456216"/>
    </reaction>
</comment>
<comment type="subunit">
    <text evidence="1">Monomer and homodimer. Interacts with small ribosomal subunit protein uS11. Not a structural component of 43S pre-ribosomes, but transiently interacts with them by binding to uS11.</text>
</comment>
<comment type="subcellular location">
    <subcellularLocation>
        <location evidence="1">Cytoplasm</location>
    </subcellularLocation>
    <subcellularLocation>
        <location evidence="1">Nucleus</location>
    </subcellularLocation>
</comment>
<comment type="similarity">
    <text evidence="1">Belongs to the adenylate kinase family. AK6 subfamily.</text>
</comment>
<name>KAD6_DICDI</name>